<comment type="caution">
    <text evidence="2">Product of a dubious CDS prediction.</text>
</comment>
<evidence type="ECO:0000256" key="1">
    <source>
        <dbReference type="SAM" id="MobiDB-lite"/>
    </source>
</evidence>
<evidence type="ECO:0000305" key="2"/>
<feature type="chain" id="PRO_0000337031" description="Putative uncharacterized protein FLJ46204">
    <location>
        <begin position="1"/>
        <end position="223"/>
    </location>
</feature>
<feature type="region of interest" description="Disordered" evidence="1">
    <location>
        <begin position="117"/>
        <end position="148"/>
    </location>
</feature>
<feature type="sequence variant" id="VAR_043569" description="In dbSNP:rs11944677.">
    <original>R</original>
    <variation>H</variation>
    <location>
        <position position="2"/>
    </location>
</feature>
<feature type="sequence conflict" description="In Ref. 1; AK128083." evidence="2" ref="1">
    <original>M</original>
    <variation>MHT</variation>
    <location>
        <position position="170"/>
    </location>
</feature>
<dbReference type="EMBL" id="AK128083">
    <property type="status" value="NOT_ANNOTATED_CDS"/>
    <property type="molecule type" value="mRNA"/>
</dbReference>
<dbReference type="EMBL" id="AC112243">
    <property type="status" value="NOT_ANNOTATED_CDS"/>
    <property type="molecule type" value="Genomic_DNA"/>
</dbReference>
<dbReference type="GlyGen" id="Q6ZRP5">
    <property type="glycosylation" value="1 site"/>
</dbReference>
<dbReference type="iPTMnet" id="Q6ZRP5"/>
<dbReference type="PhosphoSitePlus" id="Q6ZRP5"/>
<dbReference type="BioMuta" id="-"/>
<dbReference type="PeptideAtlas" id="Q6ZRP5"/>
<dbReference type="neXtProt" id="NX_Q6ZRP5"/>
<dbReference type="InParanoid" id="Q6ZRP5"/>
<dbReference type="PAN-GO" id="Q6ZRP5">
    <property type="GO annotations" value="0 GO annotations based on evolutionary models"/>
</dbReference>
<dbReference type="Pharos" id="Q6ZRP5">
    <property type="development level" value="Tdark"/>
</dbReference>
<dbReference type="Proteomes" id="UP000005640">
    <property type="component" value="Unplaced"/>
</dbReference>
<dbReference type="RNAct" id="Q6ZRP5">
    <property type="molecule type" value="protein"/>
</dbReference>
<dbReference type="PANTHER" id="PTHR45134:SF23">
    <property type="match status" value="1"/>
</dbReference>
<dbReference type="PANTHER" id="PTHR45134">
    <property type="entry name" value="OS08G0543275 PROTEIN"/>
    <property type="match status" value="1"/>
</dbReference>
<organism>
    <name type="scientific">Homo sapiens</name>
    <name type="common">Human</name>
    <dbReference type="NCBI Taxonomy" id="9606"/>
    <lineage>
        <taxon>Eukaryota</taxon>
        <taxon>Metazoa</taxon>
        <taxon>Chordata</taxon>
        <taxon>Craniata</taxon>
        <taxon>Vertebrata</taxon>
        <taxon>Euteleostomi</taxon>
        <taxon>Mammalia</taxon>
        <taxon>Eutheria</taxon>
        <taxon>Euarchontoglires</taxon>
        <taxon>Primates</taxon>
        <taxon>Haplorrhini</taxon>
        <taxon>Catarrhini</taxon>
        <taxon>Hominidae</taxon>
        <taxon>Homo</taxon>
    </lineage>
</organism>
<reference key="1">
    <citation type="journal article" date="2004" name="Nat. Genet.">
        <title>Complete sequencing and characterization of 21,243 full-length human cDNAs.</title>
        <authorList>
            <person name="Ota T."/>
            <person name="Suzuki Y."/>
            <person name="Nishikawa T."/>
            <person name="Otsuki T."/>
            <person name="Sugiyama T."/>
            <person name="Irie R."/>
            <person name="Wakamatsu A."/>
            <person name="Hayashi K."/>
            <person name="Sato H."/>
            <person name="Nagai K."/>
            <person name="Kimura K."/>
            <person name="Makita H."/>
            <person name="Sekine M."/>
            <person name="Obayashi M."/>
            <person name="Nishi T."/>
            <person name="Shibahara T."/>
            <person name="Tanaka T."/>
            <person name="Ishii S."/>
            <person name="Yamamoto J."/>
            <person name="Saito K."/>
            <person name="Kawai Y."/>
            <person name="Isono Y."/>
            <person name="Nakamura Y."/>
            <person name="Nagahari K."/>
            <person name="Murakami K."/>
            <person name="Yasuda T."/>
            <person name="Iwayanagi T."/>
            <person name="Wagatsuma M."/>
            <person name="Shiratori A."/>
            <person name="Sudo H."/>
            <person name="Hosoiri T."/>
            <person name="Kaku Y."/>
            <person name="Kodaira H."/>
            <person name="Kondo H."/>
            <person name="Sugawara M."/>
            <person name="Takahashi M."/>
            <person name="Kanda K."/>
            <person name="Yokoi T."/>
            <person name="Furuya T."/>
            <person name="Kikkawa E."/>
            <person name="Omura Y."/>
            <person name="Abe K."/>
            <person name="Kamihara K."/>
            <person name="Katsuta N."/>
            <person name="Sato K."/>
            <person name="Tanikawa M."/>
            <person name="Yamazaki M."/>
            <person name="Ninomiya K."/>
            <person name="Ishibashi T."/>
            <person name="Yamashita H."/>
            <person name="Murakawa K."/>
            <person name="Fujimori K."/>
            <person name="Tanai H."/>
            <person name="Kimata M."/>
            <person name="Watanabe M."/>
            <person name="Hiraoka S."/>
            <person name="Chiba Y."/>
            <person name="Ishida S."/>
            <person name="Ono Y."/>
            <person name="Takiguchi S."/>
            <person name="Watanabe S."/>
            <person name="Yosida M."/>
            <person name="Hotuta T."/>
            <person name="Kusano J."/>
            <person name="Kanehori K."/>
            <person name="Takahashi-Fujii A."/>
            <person name="Hara H."/>
            <person name="Tanase T.-O."/>
            <person name="Nomura Y."/>
            <person name="Togiya S."/>
            <person name="Komai F."/>
            <person name="Hara R."/>
            <person name="Takeuchi K."/>
            <person name="Arita M."/>
            <person name="Imose N."/>
            <person name="Musashino K."/>
            <person name="Yuuki H."/>
            <person name="Oshima A."/>
            <person name="Sasaki N."/>
            <person name="Aotsuka S."/>
            <person name="Yoshikawa Y."/>
            <person name="Matsunawa H."/>
            <person name="Ichihara T."/>
            <person name="Shiohata N."/>
            <person name="Sano S."/>
            <person name="Moriya S."/>
            <person name="Momiyama H."/>
            <person name="Satoh N."/>
            <person name="Takami S."/>
            <person name="Terashima Y."/>
            <person name="Suzuki O."/>
            <person name="Nakagawa S."/>
            <person name="Senoh A."/>
            <person name="Mizoguchi H."/>
            <person name="Goto Y."/>
            <person name="Shimizu F."/>
            <person name="Wakebe H."/>
            <person name="Hishigaki H."/>
            <person name="Watanabe T."/>
            <person name="Sugiyama A."/>
            <person name="Takemoto M."/>
            <person name="Kawakami B."/>
            <person name="Yamazaki M."/>
            <person name="Watanabe K."/>
            <person name="Kumagai A."/>
            <person name="Itakura S."/>
            <person name="Fukuzumi Y."/>
            <person name="Fujimori Y."/>
            <person name="Komiyama M."/>
            <person name="Tashiro H."/>
            <person name="Tanigami A."/>
            <person name="Fujiwara T."/>
            <person name="Ono T."/>
            <person name="Yamada K."/>
            <person name="Fujii Y."/>
            <person name="Ozaki K."/>
            <person name="Hirao M."/>
            <person name="Ohmori Y."/>
            <person name="Kawabata A."/>
            <person name="Hikiji T."/>
            <person name="Kobatake N."/>
            <person name="Inagaki H."/>
            <person name="Ikema Y."/>
            <person name="Okamoto S."/>
            <person name="Okitani R."/>
            <person name="Kawakami T."/>
            <person name="Noguchi S."/>
            <person name="Itoh T."/>
            <person name="Shigeta K."/>
            <person name="Senba T."/>
            <person name="Matsumura K."/>
            <person name="Nakajima Y."/>
            <person name="Mizuno T."/>
            <person name="Morinaga M."/>
            <person name="Sasaki M."/>
            <person name="Togashi T."/>
            <person name="Oyama M."/>
            <person name="Hata H."/>
            <person name="Watanabe M."/>
            <person name="Komatsu T."/>
            <person name="Mizushima-Sugano J."/>
            <person name="Satoh T."/>
            <person name="Shirai Y."/>
            <person name="Takahashi Y."/>
            <person name="Nakagawa K."/>
            <person name="Okumura K."/>
            <person name="Nagase T."/>
            <person name="Nomura N."/>
            <person name="Kikuchi H."/>
            <person name="Masuho Y."/>
            <person name="Yamashita R."/>
            <person name="Nakai K."/>
            <person name="Yada T."/>
            <person name="Nakamura Y."/>
            <person name="Ohara O."/>
            <person name="Isogai T."/>
            <person name="Sugano S."/>
        </authorList>
    </citation>
    <scope>NUCLEOTIDE SEQUENCE [LARGE SCALE MRNA]</scope>
    <source>
        <tissue>Testis</tissue>
    </source>
</reference>
<reference key="2">
    <citation type="journal article" date="2005" name="Nature">
        <title>Generation and annotation of the DNA sequences of human chromosomes 2 and 4.</title>
        <authorList>
            <person name="Hillier L.W."/>
            <person name="Graves T.A."/>
            <person name="Fulton R.S."/>
            <person name="Fulton L.A."/>
            <person name="Pepin K.H."/>
            <person name="Minx P."/>
            <person name="Wagner-McPherson C."/>
            <person name="Layman D."/>
            <person name="Wylie K."/>
            <person name="Sekhon M."/>
            <person name="Becker M.C."/>
            <person name="Fewell G.A."/>
            <person name="Delehaunty K.D."/>
            <person name="Miner T.L."/>
            <person name="Nash W.E."/>
            <person name="Kremitzki C."/>
            <person name="Oddy L."/>
            <person name="Du H."/>
            <person name="Sun H."/>
            <person name="Bradshaw-Cordum H."/>
            <person name="Ali J."/>
            <person name="Carter J."/>
            <person name="Cordes M."/>
            <person name="Harris A."/>
            <person name="Isak A."/>
            <person name="van Brunt A."/>
            <person name="Nguyen C."/>
            <person name="Du F."/>
            <person name="Courtney L."/>
            <person name="Kalicki J."/>
            <person name="Ozersky P."/>
            <person name="Abbott S."/>
            <person name="Armstrong J."/>
            <person name="Belter E.A."/>
            <person name="Caruso L."/>
            <person name="Cedroni M."/>
            <person name="Cotton M."/>
            <person name="Davidson T."/>
            <person name="Desai A."/>
            <person name="Elliott G."/>
            <person name="Erb T."/>
            <person name="Fronick C."/>
            <person name="Gaige T."/>
            <person name="Haakenson W."/>
            <person name="Haglund K."/>
            <person name="Holmes A."/>
            <person name="Harkins R."/>
            <person name="Kim K."/>
            <person name="Kruchowski S.S."/>
            <person name="Strong C.M."/>
            <person name="Grewal N."/>
            <person name="Goyea E."/>
            <person name="Hou S."/>
            <person name="Levy A."/>
            <person name="Martinka S."/>
            <person name="Mead K."/>
            <person name="McLellan M.D."/>
            <person name="Meyer R."/>
            <person name="Randall-Maher J."/>
            <person name="Tomlinson C."/>
            <person name="Dauphin-Kohlberg S."/>
            <person name="Kozlowicz-Reilly A."/>
            <person name="Shah N."/>
            <person name="Swearengen-Shahid S."/>
            <person name="Snider J."/>
            <person name="Strong J.T."/>
            <person name="Thompson J."/>
            <person name="Yoakum M."/>
            <person name="Leonard S."/>
            <person name="Pearman C."/>
            <person name="Trani L."/>
            <person name="Radionenko M."/>
            <person name="Waligorski J.E."/>
            <person name="Wang C."/>
            <person name="Rock S.M."/>
            <person name="Tin-Wollam A.-M."/>
            <person name="Maupin R."/>
            <person name="Latreille P."/>
            <person name="Wendl M.C."/>
            <person name="Yang S.-P."/>
            <person name="Pohl C."/>
            <person name="Wallis J.W."/>
            <person name="Spieth J."/>
            <person name="Bieri T.A."/>
            <person name="Berkowicz N."/>
            <person name="Nelson J.O."/>
            <person name="Osborne J."/>
            <person name="Ding L."/>
            <person name="Meyer R."/>
            <person name="Sabo A."/>
            <person name="Shotland Y."/>
            <person name="Sinha P."/>
            <person name="Wohldmann P.E."/>
            <person name="Cook L.L."/>
            <person name="Hickenbotham M.T."/>
            <person name="Eldred J."/>
            <person name="Williams D."/>
            <person name="Jones T.A."/>
            <person name="She X."/>
            <person name="Ciccarelli F.D."/>
            <person name="Izaurralde E."/>
            <person name="Taylor J."/>
            <person name="Schmutz J."/>
            <person name="Myers R.M."/>
            <person name="Cox D.R."/>
            <person name="Huang X."/>
            <person name="McPherson J.D."/>
            <person name="Mardis E.R."/>
            <person name="Clifton S.W."/>
            <person name="Warren W.C."/>
            <person name="Chinwalla A.T."/>
            <person name="Eddy S.R."/>
            <person name="Marra M.A."/>
            <person name="Ovcharenko I."/>
            <person name="Furey T.S."/>
            <person name="Miller W."/>
            <person name="Eichler E.E."/>
            <person name="Bork P."/>
            <person name="Suyama M."/>
            <person name="Torrents D."/>
            <person name="Waterston R.H."/>
            <person name="Wilson R.K."/>
        </authorList>
    </citation>
    <scope>NUCLEOTIDE SEQUENCE [LARGE SCALE GENOMIC DNA]</scope>
</reference>
<proteinExistence type="uncertain"/>
<keyword id="KW-1185">Reference proteome</keyword>
<name>YD019_HUMAN</name>
<protein>
    <recommendedName>
        <fullName>Putative uncharacterized protein FLJ46204</fullName>
    </recommendedName>
</protein>
<accession>Q6ZRP5</accession>
<sequence length="223" mass="25262">MRIFRGCTQPSTLGQGVHSPLMKAQFITHHSRKQVKPGEGWGRSSFTRACRDHTTILSGNRSFSAVAATPAKHKHMHTRTHTHMHTHTGMHTLTGTHVHTPHTQMHTRILTLSHMHTHAHTHAHTHGHTHTRAHSTHAHTHAHSHYHTRTLTLTHSHAHSCTLTSTITHMHTHTHMHTHTSTLTRTLTLTHTHMHTFLSLVSHLAGYISCQFIFSSENPRLCH</sequence>